<dbReference type="EC" id="1.-.-.-" evidence="3"/>
<dbReference type="EMBL" id="HG315671">
    <property type="protein sequence ID" value="CDF79936.1"/>
    <property type="molecule type" value="Genomic_DNA"/>
</dbReference>
<dbReference type="RefSeq" id="WP_038530545.1">
    <property type="nucleotide sequence ID" value="NZ_HG315671.1"/>
</dbReference>
<dbReference type="SMR" id="T2KNC8"/>
<dbReference type="STRING" id="1347342.BN863_22240"/>
<dbReference type="PATRIC" id="fig|1347342.6.peg.2231"/>
<dbReference type="eggNOG" id="COG0673">
    <property type="taxonomic scope" value="Bacteria"/>
</dbReference>
<dbReference type="HOGENOM" id="CLU_023194_1_3_10"/>
<dbReference type="OrthoDB" id="9795543at2"/>
<dbReference type="Proteomes" id="UP000016160">
    <property type="component" value="Chromosome"/>
</dbReference>
<dbReference type="GO" id="GO:0009986">
    <property type="term" value="C:cell surface"/>
    <property type="evidence" value="ECO:0007669"/>
    <property type="project" value="UniProtKB-SubCell"/>
</dbReference>
<dbReference type="GO" id="GO:0000166">
    <property type="term" value="F:nucleotide binding"/>
    <property type="evidence" value="ECO:0007669"/>
    <property type="project" value="InterPro"/>
</dbReference>
<dbReference type="GO" id="GO:0016491">
    <property type="term" value="F:oxidoreductase activity"/>
    <property type="evidence" value="ECO:0007669"/>
    <property type="project" value="UniProtKB-KW"/>
</dbReference>
<dbReference type="Gene3D" id="3.30.360.10">
    <property type="entry name" value="Dihydrodipicolinate Reductase, domain 2"/>
    <property type="match status" value="1"/>
</dbReference>
<dbReference type="Gene3D" id="3.40.50.720">
    <property type="entry name" value="NAD(P)-binding Rossmann-like Domain"/>
    <property type="match status" value="1"/>
</dbReference>
<dbReference type="InterPro" id="IPR000683">
    <property type="entry name" value="Gfo/Idh/MocA-like_OxRdtase_N"/>
</dbReference>
<dbReference type="InterPro" id="IPR050463">
    <property type="entry name" value="Gfo/Idh/MocA_oxidrdct_glycsds"/>
</dbReference>
<dbReference type="InterPro" id="IPR055170">
    <property type="entry name" value="GFO_IDH_MocA-like_dom"/>
</dbReference>
<dbReference type="InterPro" id="IPR036291">
    <property type="entry name" value="NAD(P)-bd_dom_sf"/>
</dbReference>
<dbReference type="PANTHER" id="PTHR43818">
    <property type="entry name" value="BCDNA.GH03377"/>
    <property type="match status" value="1"/>
</dbReference>
<dbReference type="PANTHER" id="PTHR43818:SF11">
    <property type="entry name" value="BCDNA.GH03377"/>
    <property type="match status" value="1"/>
</dbReference>
<dbReference type="Pfam" id="PF01408">
    <property type="entry name" value="GFO_IDH_MocA"/>
    <property type="match status" value="1"/>
</dbReference>
<dbReference type="Pfam" id="PF22725">
    <property type="entry name" value="GFO_IDH_MocA_C3"/>
    <property type="match status" value="1"/>
</dbReference>
<dbReference type="SUPFAM" id="SSF55347">
    <property type="entry name" value="Glyceraldehyde-3-phosphate dehydrogenase-like, C-terminal domain"/>
    <property type="match status" value="1"/>
</dbReference>
<dbReference type="SUPFAM" id="SSF51735">
    <property type="entry name" value="NAD(P)-binding Rossmann-fold domains"/>
    <property type="match status" value="1"/>
</dbReference>
<keyword id="KW-0560">Oxidoreductase</keyword>
<keyword id="KW-1185">Reference proteome</keyword>
<evidence type="ECO:0000269" key="1">
    <source>
    </source>
</evidence>
<evidence type="ECO:0000303" key="2">
    <source>
    </source>
</evidence>
<evidence type="ECO:0000305" key="3"/>
<evidence type="ECO:0000305" key="4">
    <source>
    </source>
</evidence>
<feature type="chain" id="PRO_0000448298" description="Oxidoreductase P35">
    <location>
        <begin position="1"/>
        <end position="321"/>
    </location>
</feature>
<organism>
    <name type="scientific">Formosa agariphila (strain DSM 15362 / KCTC 12365 / LMG 23005 / KMM 3901 / M-2Alg 35-1)</name>
    <dbReference type="NCBI Taxonomy" id="1347342"/>
    <lineage>
        <taxon>Bacteria</taxon>
        <taxon>Pseudomonadati</taxon>
        <taxon>Bacteroidota</taxon>
        <taxon>Flavobacteriia</taxon>
        <taxon>Flavobacteriales</taxon>
        <taxon>Flavobacteriaceae</taxon>
        <taxon>Formosa</taxon>
    </lineage>
</organism>
<proteinExistence type="evidence at transcript level"/>
<gene>
    <name type="ORF">BN863_22240</name>
</gene>
<protein>
    <recommendedName>
        <fullName evidence="3">Oxidoreductase P35</fullName>
        <ecNumber evidence="3">1.-.-.-</ecNumber>
    </recommendedName>
    <alternativeName>
        <fullName evidence="2">P35_oxidoreductase</fullName>
    </alternativeName>
    <alternativeName>
        <fullName evidence="2">Polysaccharide utilization locus H protein P35</fullName>
        <shortName>PUL H protein P35</shortName>
    </alternativeName>
</protein>
<name>PLH35_FORAG</name>
<sequence>MESRINWGIIGCGNVAEVKSGPAFYKTENSTLVAVMRRNEDKVIDFANRHGVANWTTNAEALIQNDLINAVYIATPPSSHLQYALRAINVGKNVYLEKPMVLNNHEANILVEAVKRSNVKVTVAHYRRELPVYLKIKELLDSNVIGNVISAEIQIKQTRNTNLIAKTEVNWRTIPEISGGGYFHDIAPHQIDLMCHYFGEVENIKKGSCKENQVSHQDVSGEVLFKNGVQFSGTWNFNALEDKDECTIKGERGSISFSFYTSTITVSKNGLIESYHYENPEHVQQPMIEKTVGYFLAHNSNPCSVEEAAMVTHIMDVFCGT</sequence>
<comment type="function">
    <text evidence="4">Oxidoreductase that may be involved in ulvan degradation (Probable). Ulvan is the main polysaccharide component of the Ulvales (green seaweed) cell wall. It is composed of disaccharide building blocks comprising 3-sulfated rhamnose (Rha3S) linked to D-glucuronic acid (GlcA), L-iduronic acid (IduA), or D-xylose (Xyl) (Probable).</text>
</comment>
<comment type="subcellular location">
    <subcellularLocation>
        <location evidence="4">Cell surface</location>
    </subcellularLocation>
</comment>
<comment type="induction">
    <text evidence="1">By ulvan.</text>
</comment>
<comment type="similarity">
    <text evidence="3">Belongs to the Gfo/Idh/MocA family.</text>
</comment>
<reference key="1">
    <citation type="journal article" date="2013" name="Appl. Environ. Microbiol.">
        <title>The genome of the alga-associated marine flavobacterium Formosa agariphila KMM 3901T reveals a broad potential for degradation of algal polysaccharides.</title>
        <authorList>
            <person name="Mann A.J."/>
            <person name="Hahnke R.L."/>
            <person name="Huang S."/>
            <person name="Werner J."/>
            <person name="Xing P."/>
            <person name="Barbeyron T."/>
            <person name="Huettel B."/>
            <person name="Stueber K."/>
            <person name="Reinhardt R."/>
            <person name="Harder J."/>
            <person name="Gloeckner F.O."/>
            <person name="Amann R.I."/>
            <person name="Teeling H."/>
        </authorList>
    </citation>
    <scope>NUCLEOTIDE SEQUENCE [LARGE SCALE GENOMIC DNA]</scope>
    <source>
        <strain>DSM 15362 / KCTC 12365 / LMG 23005 / KMM 3901 / M-2Alg 35-1</strain>
    </source>
</reference>
<reference key="2">
    <citation type="journal article" date="2019" name="Nat. Chem. Biol.">
        <title>A marine bacterial enzymatic cascade degrades the algal polysaccharide ulvan.</title>
        <authorList>
            <person name="Reisky L."/>
            <person name="Prechoux A."/>
            <person name="Zuehlke M.K."/>
            <person name="Baeumgen M."/>
            <person name="Robb C.S."/>
            <person name="Gerlach N."/>
            <person name="Roret T."/>
            <person name="Stanetty C."/>
            <person name="Larocque R."/>
            <person name="Michel G."/>
            <person name="Song T."/>
            <person name="Markert S."/>
            <person name="Unfried F."/>
            <person name="Mihovilovic M.D."/>
            <person name="Trautwein-Schult A."/>
            <person name="Becher D."/>
            <person name="Schweder T."/>
            <person name="Bornscheuer U.T."/>
            <person name="Hehemann J.H."/>
        </authorList>
    </citation>
    <scope>FUNCTION</scope>
    <scope>SUBCELLULAR LOCATION</scope>
    <scope>INDUCTION</scope>
</reference>
<accession>T2KNC8</accession>